<reference key="1">
    <citation type="journal article" date="2001" name="Nature">
        <title>Complete genome sequence of Salmonella enterica serovar Typhimurium LT2.</title>
        <authorList>
            <person name="McClelland M."/>
            <person name="Sanderson K.E."/>
            <person name="Spieth J."/>
            <person name="Clifton S.W."/>
            <person name="Latreille P."/>
            <person name="Courtney L."/>
            <person name="Porwollik S."/>
            <person name="Ali J."/>
            <person name="Dante M."/>
            <person name="Du F."/>
            <person name="Hou S."/>
            <person name="Layman D."/>
            <person name="Leonard S."/>
            <person name="Nguyen C."/>
            <person name="Scott K."/>
            <person name="Holmes A."/>
            <person name="Grewal N."/>
            <person name="Mulvaney E."/>
            <person name="Ryan E."/>
            <person name="Sun H."/>
            <person name="Florea L."/>
            <person name="Miller W."/>
            <person name="Stoneking T."/>
            <person name="Nhan M."/>
            <person name="Waterston R."/>
            <person name="Wilson R.K."/>
        </authorList>
    </citation>
    <scope>NUCLEOTIDE SEQUENCE [LARGE SCALE GENOMIC DNA]</scope>
    <source>
        <strain>LT2 / SGSC1412 / ATCC 700720</strain>
    </source>
</reference>
<reference key="2">
    <citation type="journal article" date="2001" name="J. Bacteriol.">
        <title>Complete nucleotide sequence of a 43-kilobase genomic island associated with the multidrug resistance region of Salmonella enterica serovar Typhimurium DT104 and its identification in phage type DT120 and serovar Agona.</title>
        <authorList>
            <person name="Boyd D."/>
            <person name="Peters G.A."/>
            <person name="Cloeckaert A."/>
            <person name="Boumedine K.S."/>
            <person name="Chaslus-Dancla E."/>
            <person name="Imberechts H."/>
            <person name="Mulvey M.R."/>
        </authorList>
    </citation>
    <scope>NUCLEOTIDE SEQUENCE [GENOMIC DNA] OF 1-209</scope>
    <source>
        <strain>DT104 / 96-5227</strain>
    </source>
</reference>
<sequence>MKRFLLCSFALVLLYPAGIDMYLVGLPRIAADLNASEAQLHIAFSVYLAGMATAMLFAGKIADQSGRKPVAIVGALVFMMASLLCSRASEGSLFLSGRFLQGVGAGGCYVVAFAILRDTLDEHRRAKVLSLLNGITCIVPVLAPVVGHLIMLRFPWQSLFYTMSAMGIIVGLLSLFILRETRPVRLAPRDLSRSSPAAESLINRFFVSRLAITTLSVSVILTFVNASPVLLMEVMGFSRGDYAITMALTAGVSMVVSFSTPFALGLFKPRTLMLVSQGLFLTAGVTLSLAHTNTVTLFGLTLICAGFSVGFGVAMSQALGPFSLRAGVASSTLGIAQVCGSSLWIWLAAILGISAMNMLIGILIGCSIVSILLIFSVTPNRSVAEHEEIPYQSRP</sequence>
<keyword id="KW-0997">Cell inner membrane</keyword>
<keyword id="KW-1003">Cell membrane</keyword>
<keyword id="KW-0472">Membrane</keyword>
<keyword id="KW-1185">Reference proteome</keyword>
<keyword id="KW-0812">Transmembrane</keyword>
<keyword id="KW-1133">Transmembrane helix</keyword>
<keyword id="KW-0813">Transport</keyword>
<name>MDTL_SALTY</name>
<gene>
    <name type="primary">mdtL</name>
    <name type="ordered locus">STM3847</name>
</gene>
<accession>Q8ZKY1</accession>
<accession>Q9FDH5</accession>
<organism>
    <name type="scientific">Salmonella typhimurium (strain LT2 / SGSC1412 / ATCC 700720)</name>
    <dbReference type="NCBI Taxonomy" id="99287"/>
    <lineage>
        <taxon>Bacteria</taxon>
        <taxon>Pseudomonadati</taxon>
        <taxon>Pseudomonadota</taxon>
        <taxon>Gammaproteobacteria</taxon>
        <taxon>Enterobacterales</taxon>
        <taxon>Enterobacteriaceae</taxon>
        <taxon>Salmonella</taxon>
    </lineage>
</organism>
<feature type="chain" id="PRO_0000173360" description="Multidrug resistance protein MdtL">
    <location>
        <begin position="1"/>
        <end position="395"/>
    </location>
</feature>
<feature type="topological domain" description="Cytoplasmic" evidence="2">
    <location>
        <begin position="1"/>
        <end position="3"/>
    </location>
</feature>
<feature type="transmembrane region" description="Helical" evidence="2">
    <location>
        <begin position="4"/>
        <end position="24"/>
    </location>
</feature>
<feature type="topological domain" description="Periplasmic" evidence="2">
    <location>
        <begin position="25"/>
        <end position="41"/>
    </location>
</feature>
<feature type="transmembrane region" description="Helical" evidence="2">
    <location>
        <begin position="42"/>
        <end position="62"/>
    </location>
</feature>
<feature type="topological domain" description="Cytoplasmic" evidence="2">
    <location>
        <begin position="63"/>
        <end position="68"/>
    </location>
</feature>
<feature type="transmembrane region" description="Helical" evidence="2">
    <location>
        <begin position="69"/>
        <end position="89"/>
    </location>
</feature>
<feature type="topological domain" description="Periplasmic" evidence="2">
    <location>
        <begin position="90"/>
        <end position="92"/>
    </location>
</feature>
<feature type="transmembrane region" description="Helical" evidence="2">
    <location>
        <begin position="93"/>
        <end position="113"/>
    </location>
</feature>
<feature type="topological domain" description="Cytoplasmic" evidence="2">
    <location>
        <begin position="114"/>
        <end position="130"/>
    </location>
</feature>
<feature type="transmembrane region" description="Helical" evidence="2">
    <location>
        <begin position="131"/>
        <end position="151"/>
    </location>
</feature>
<feature type="topological domain" description="Periplasmic" evidence="2">
    <location>
        <begin position="152"/>
        <end position="157"/>
    </location>
</feature>
<feature type="transmembrane region" description="Helical" evidence="2">
    <location>
        <begin position="158"/>
        <end position="178"/>
    </location>
</feature>
<feature type="topological domain" description="Cytoplasmic" evidence="2">
    <location>
        <begin position="179"/>
        <end position="216"/>
    </location>
</feature>
<feature type="transmembrane region" description="Helical" evidence="2">
    <location>
        <begin position="217"/>
        <end position="237"/>
    </location>
</feature>
<feature type="topological domain" description="Periplasmic" evidence="2">
    <location>
        <begin position="238"/>
        <end position="246"/>
    </location>
</feature>
<feature type="transmembrane region" description="Helical" evidence="2">
    <location>
        <begin position="247"/>
        <end position="267"/>
    </location>
</feature>
<feature type="topological domain" description="Cytoplasmic" evidence="2">
    <location>
        <begin position="268"/>
        <end position="270"/>
    </location>
</feature>
<feature type="transmembrane region" description="Helical" evidence="2">
    <location>
        <begin position="271"/>
        <end position="291"/>
    </location>
</feature>
<feature type="topological domain" description="Periplasmic" evidence="2">
    <location>
        <begin position="292"/>
        <end position="294"/>
    </location>
</feature>
<feature type="transmembrane region" description="Helical" evidence="2">
    <location>
        <begin position="295"/>
        <end position="315"/>
    </location>
</feature>
<feature type="topological domain" description="Cytoplasmic" evidence="2">
    <location>
        <begin position="316"/>
        <end position="327"/>
    </location>
</feature>
<feature type="transmembrane region" description="Helical" evidence="2">
    <location>
        <begin position="328"/>
        <end position="350"/>
    </location>
</feature>
<feature type="topological domain" description="Periplasmic" evidence="2">
    <location>
        <begin position="351"/>
        <end position="354"/>
    </location>
</feature>
<feature type="transmembrane region" description="Helical" evidence="2">
    <location>
        <begin position="355"/>
        <end position="377"/>
    </location>
</feature>
<feature type="topological domain" description="Cytoplasmic" evidence="2">
    <location>
        <begin position="378"/>
        <end position="395"/>
    </location>
</feature>
<dbReference type="EMBL" id="AE006468">
    <property type="protein sequence ID" value="AAL22705.1"/>
    <property type="molecule type" value="Genomic_DNA"/>
</dbReference>
<dbReference type="EMBL" id="AF261825">
    <property type="protein sequence ID" value="AAG03011.1"/>
    <property type="molecule type" value="Genomic_DNA"/>
</dbReference>
<dbReference type="RefSeq" id="WP_000819619.1">
    <property type="nucleotide sequence ID" value="NC_003197.2"/>
</dbReference>
<dbReference type="SMR" id="Q8ZKY1"/>
<dbReference type="STRING" id="99287.STM3847"/>
<dbReference type="PaxDb" id="99287-STM3847"/>
<dbReference type="KEGG" id="stm:STM3847"/>
<dbReference type="PATRIC" id="fig|99287.12.peg.4076"/>
<dbReference type="HOGENOM" id="CLU_001265_47_1_6"/>
<dbReference type="OMA" id="SGIDMYL"/>
<dbReference type="PhylomeDB" id="Q8ZKY1"/>
<dbReference type="BioCyc" id="SENT99287:STM3847-MONOMER"/>
<dbReference type="Proteomes" id="UP000001014">
    <property type="component" value="Chromosome"/>
</dbReference>
<dbReference type="GO" id="GO:0005886">
    <property type="term" value="C:plasma membrane"/>
    <property type="evidence" value="ECO:0000318"/>
    <property type="project" value="GO_Central"/>
</dbReference>
<dbReference type="GO" id="GO:0022857">
    <property type="term" value="F:transmembrane transporter activity"/>
    <property type="evidence" value="ECO:0000318"/>
    <property type="project" value="GO_Central"/>
</dbReference>
<dbReference type="GO" id="GO:1990961">
    <property type="term" value="P:xenobiotic detoxification by transmembrane export across the plasma membrane"/>
    <property type="evidence" value="ECO:0000318"/>
    <property type="project" value="GO_Central"/>
</dbReference>
<dbReference type="CDD" id="cd17320">
    <property type="entry name" value="MFS_MdfA_MDR_like"/>
    <property type="match status" value="1"/>
</dbReference>
<dbReference type="FunFam" id="1.20.1720.10:FF:000003">
    <property type="entry name" value="Multidrug resistance protein MdtL"/>
    <property type="match status" value="1"/>
</dbReference>
<dbReference type="Gene3D" id="1.20.1720.10">
    <property type="entry name" value="Multidrug resistance protein D"/>
    <property type="match status" value="1"/>
</dbReference>
<dbReference type="HAMAP" id="MF_01530">
    <property type="entry name" value="MFS_MdtL"/>
    <property type="match status" value="1"/>
</dbReference>
<dbReference type="InterPro" id="IPR011701">
    <property type="entry name" value="MFS"/>
</dbReference>
<dbReference type="InterPro" id="IPR020846">
    <property type="entry name" value="MFS_dom"/>
</dbReference>
<dbReference type="InterPro" id="IPR036259">
    <property type="entry name" value="MFS_trans_sf"/>
</dbReference>
<dbReference type="InterPro" id="IPR023697">
    <property type="entry name" value="Multidrug-R_MdtL"/>
</dbReference>
<dbReference type="NCBIfam" id="NF007782">
    <property type="entry name" value="PRK10473.1"/>
    <property type="match status" value="1"/>
</dbReference>
<dbReference type="PANTHER" id="PTHR42718">
    <property type="entry name" value="MAJOR FACILITATOR SUPERFAMILY MULTIDRUG TRANSPORTER MFSC"/>
    <property type="match status" value="1"/>
</dbReference>
<dbReference type="PANTHER" id="PTHR42718:SF9">
    <property type="entry name" value="MAJOR FACILITATOR SUPERFAMILY MULTIDRUG TRANSPORTER MFSC"/>
    <property type="match status" value="1"/>
</dbReference>
<dbReference type="Pfam" id="PF07690">
    <property type="entry name" value="MFS_1"/>
    <property type="match status" value="1"/>
</dbReference>
<dbReference type="SUPFAM" id="SSF103473">
    <property type="entry name" value="MFS general substrate transporter"/>
    <property type="match status" value="1"/>
</dbReference>
<dbReference type="PROSITE" id="PS50850">
    <property type="entry name" value="MFS"/>
    <property type="match status" value="1"/>
</dbReference>
<evidence type="ECO:0000250" key="1"/>
<evidence type="ECO:0000255" key="2"/>
<evidence type="ECO:0000305" key="3"/>
<protein>
    <recommendedName>
        <fullName>Multidrug resistance protein MdtL</fullName>
    </recommendedName>
</protein>
<comment type="subcellular location">
    <subcellularLocation>
        <location evidence="1">Cell inner membrane</location>
        <topology evidence="1">Multi-pass membrane protein</topology>
    </subcellularLocation>
</comment>
<comment type="similarity">
    <text evidence="3">Belongs to the major facilitator superfamily. DHA1 family. MdtL (TC 2.A.1.2.22) subfamily.</text>
</comment>
<proteinExistence type="inferred from homology"/>